<dbReference type="EC" id="2.1.1.61" evidence="3"/>
<dbReference type="EMBL" id="AC006341">
    <property type="protein sequence ID" value="AAD34698.1"/>
    <property type="status" value="ALT_SEQ"/>
    <property type="molecule type" value="Genomic_DNA"/>
</dbReference>
<dbReference type="EMBL" id="CP002684">
    <property type="protein sequence ID" value="AEE29452.1"/>
    <property type="molecule type" value="Genomic_DNA"/>
</dbReference>
<dbReference type="EMBL" id="BT002316">
    <property type="protein sequence ID" value="AAN86149.1"/>
    <property type="molecule type" value="mRNA"/>
</dbReference>
<dbReference type="PIR" id="H86299">
    <property type="entry name" value="H86299"/>
</dbReference>
<dbReference type="RefSeq" id="NP_683312.2">
    <property type="nucleotide sequence ID" value="NM_148471.3"/>
</dbReference>
<dbReference type="SMR" id="Q8GUP2"/>
<dbReference type="FunCoup" id="Q8GUP2">
    <property type="interactions" value="155"/>
</dbReference>
<dbReference type="STRING" id="3702.Q8GUP2"/>
<dbReference type="GlyGen" id="Q8GUP2">
    <property type="glycosylation" value="1 site"/>
</dbReference>
<dbReference type="PaxDb" id="3702-AT1G16445.1"/>
<dbReference type="ProteomicsDB" id="192066"/>
<dbReference type="EnsemblPlants" id="AT1G16445.1">
    <property type="protein sequence ID" value="AT1G16445.1"/>
    <property type="gene ID" value="AT1G16445"/>
</dbReference>
<dbReference type="GeneID" id="838215"/>
<dbReference type="Gramene" id="AT1G16445.1">
    <property type="protein sequence ID" value="AT1G16445.1"/>
    <property type="gene ID" value="AT1G16445"/>
</dbReference>
<dbReference type="KEGG" id="ath:AT1G16445"/>
<dbReference type="Araport" id="AT1G16445"/>
<dbReference type="TAIR" id="AT1G16445"/>
<dbReference type="eggNOG" id="ENOG502QQ3B">
    <property type="taxonomic scope" value="Eukaryota"/>
</dbReference>
<dbReference type="HOGENOM" id="CLU_079190_0_0_1"/>
<dbReference type="InParanoid" id="Q8GUP2"/>
<dbReference type="OMA" id="VLVVYHG"/>
<dbReference type="PRO" id="PR:Q8GUP2"/>
<dbReference type="Proteomes" id="UP000006548">
    <property type="component" value="Chromosome 1"/>
</dbReference>
<dbReference type="ExpressionAtlas" id="Q8GUP2">
    <property type="expression patterns" value="baseline and differential"/>
</dbReference>
<dbReference type="GO" id="GO:0009507">
    <property type="term" value="C:chloroplast"/>
    <property type="evidence" value="ECO:0007005"/>
    <property type="project" value="TAIR"/>
</dbReference>
<dbReference type="GO" id="GO:0008168">
    <property type="term" value="F:methyltransferase activity"/>
    <property type="evidence" value="ECO:0007669"/>
    <property type="project" value="UniProtKB-KW"/>
</dbReference>
<dbReference type="GO" id="GO:0003729">
    <property type="term" value="F:mRNA binding"/>
    <property type="evidence" value="ECO:0000314"/>
    <property type="project" value="TAIR"/>
</dbReference>
<dbReference type="GO" id="GO:0032259">
    <property type="term" value="P:methylation"/>
    <property type="evidence" value="ECO:0007669"/>
    <property type="project" value="UniProtKB-KW"/>
</dbReference>
<dbReference type="GO" id="GO:0008033">
    <property type="term" value="P:tRNA processing"/>
    <property type="evidence" value="ECO:0007669"/>
    <property type="project" value="UniProtKB-KW"/>
</dbReference>
<dbReference type="CDD" id="cd02440">
    <property type="entry name" value="AdoMet_MTases"/>
    <property type="match status" value="1"/>
</dbReference>
<dbReference type="FunFam" id="3.40.50.150:FF:000758">
    <property type="entry name" value="S-adenosyl-L-methionine-dependent methyltransferases superfamily protein"/>
    <property type="match status" value="1"/>
</dbReference>
<dbReference type="Gene3D" id="3.40.50.150">
    <property type="entry name" value="Vaccinia Virus protein VP39"/>
    <property type="match status" value="1"/>
</dbReference>
<dbReference type="InterPro" id="IPR010719">
    <property type="entry name" value="MnmM_MeTrfase"/>
</dbReference>
<dbReference type="InterPro" id="IPR029063">
    <property type="entry name" value="SAM-dependent_MTases_sf"/>
</dbReference>
<dbReference type="PANTHER" id="PTHR35276">
    <property type="entry name" value="S-ADENOSYL-L-METHIONINE-DEPENDENT METHYLTRANSFERASES SUPERFAMILY PROTEIN"/>
    <property type="match status" value="1"/>
</dbReference>
<dbReference type="PANTHER" id="PTHR35276:SF1">
    <property type="entry name" value="TRNA (MNM(5)S(2)U34)-METHYLTRANSFERASE, CHLOROPLASTIC"/>
    <property type="match status" value="1"/>
</dbReference>
<dbReference type="Pfam" id="PF06962">
    <property type="entry name" value="rRNA_methylase"/>
    <property type="match status" value="1"/>
</dbReference>
<dbReference type="SUPFAM" id="SSF53335">
    <property type="entry name" value="S-adenosyl-L-methionine-dependent methyltransferases"/>
    <property type="match status" value="1"/>
</dbReference>
<name>MNMM_ARATH</name>
<organism>
    <name type="scientific">Arabidopsis thaliana</name>
    <name type="common">Mouse-ear cress</name>
    <dbReference type="NCBI Taxonomy" id="3702"/>
    <lineage>
        <taxon>Eukaryota</taxon>
        <taxon>Viridiplantae</taxon>
        <taxon>Streptophyta</taxon>
        <taxon>Embryophyta</taxon>
        <taxon>Tracheophyta</taxon>
        <taxon>Spermatophyta</taxon>
        <taxon>Magnoliopsida</taxon>
        <taxon>eudicotyledons</taxon>
        <taxon>Gunneridae</taxon>
        <taxon>Pentapetalae</taxon>
        <taxon>rosids</taxon>
        <taxon>malvids</taxon>
        <taxon>Brassicales</taxon>
        <taxon>Brassicaceae</taxon>
        <taxon>Camelineae</taxon>
        <taxon>Arabidopsis</taxon>
    </lineage>
</organism>
<evidence type="ECO:0000250" key="1">
    <source>
        <dbReference type="UniProtKB" id="Q2FXG9"/>
    </source>
</evidence>
<evidence type="ECO:0000255" key="2"/>
<evidence type="ECO:0000269" key="3">
    <source>
    </source>
</evidence>
<evidence type="ECO:0000303" key="4">
    <source>
    </source>
</evidence>
<evidence type="ECO:0000305" key="5"/>
<evidence type="ECO:0000312" key="6">
    <source>
        <dbReference type="Araport" id="AT1G16445"/>
    </source>
</evidence>
<evidence type="ECO:0000312" key="7">
    <source>
        <dbReference type="EMBL" id="AAD34698.1"/>
    </source>
</evidence>
<gene>
    <name evidence="6" type="ordered locus">At1g16445</name>
    <name evidence="7" type="ORF">F3O9.25</name>
</gene>
<comment type="function">
    <text evidence="3">Involved in the biosynthesis of 5-methylaminomethyl-2-thiouridine (mnm(5)s(2)U) at the wobble position (U34) in tRNA (PubMed:36762482). Catalyzes the transfer of a methyl group from S-adenosyl-L-methionine to nm(5)s(2)U34 to form mnm(5)s(2)U34 (PubMed:36762482).</text>
</comment>
<comment type="catalytic activity">
    <reaction evidence="3">
        <text>5-aminomethyl-2-thiouridine(34) in tRNA + S-adenosyl-L-methionine = 5-methylaminomethyl-2-thiouridine(34) in tRNA + S-adenosyl-L-homocysteine + H(+)</text>
        <dbReference type="Rhea" id="RHEA:19569"/>
        <dbReference type="Rhea" id="RHEA-COMP:10195"/>
        <dbReference type="Rhea" id="RHEA-COMP:10197"/>
        <dbReference type="ChEBI" id="CHEBI:15378"/>
        <dbReference type="ChEBI" id="CHEBI:57856"/>
        <dbReference type="ChEBI" id="CHEBI:59789"/>
        <dbReference type="ChEBI" id="CHEBI:74454"/>
        <dbReference type="ChEBI" id="CHEBI:74455"/>
        <dbReference type="EC" id="2.1.1.61"/>
    </reaction>
    <physiologicalReaction direction="left-to-right" evidence="3">
        <dbReference type="Rhea" id="RHEA:19570"/>
    </physiologicalReaction>
</comment>
<comment type="pathway">
    <text evidence="3">tRNA modification.</text>
</comment>
<comment type="subcellular location">
    <subcellularLocation>
        <location evidence="2">Plastid</location>
        <location evidence="2">Chloroplast</location>
    </subcellularLocation>
</comment>
<comment type="similarity">
    <text evidence="5">Belongs to the methyltransferase superfamily. MnmM family.</text>
</comment>
<comment type="sequence caution" evidence="5">
    <conflict type="erroneous gene model prediction">
        <sequence resource="EMBL-CDS" id="AAD34698"/>
    </conflict>
</comment>
<sequence>MAAGFFQAEMSILSSTLARSYSLPIRKTLMTFDFRIAMQRNPCLRIRRSCVAAFSSTPSHSRNFPIRGLEDVFVGYLFGRKKATEVAHVVWEQVIQKGDTVIDATCGNGNDTLAMLKMVMHDSVGCGGYVYAMDIQKDAIESTSSLLDQAVGSKEKECVKLFNLCHSKMGEIVPENARVRMVAFNLGYLPGGNKSIITLSDTTLSALKAAERILKPGGLISLVVYIGHPGGREELEVVEAFGSGLPVSDWICCKFQMLNRPLAPVLVFMFKREN</sequence>
<accession>Q8GUP2</accession>
<accession>Q9SA44</accession>
<protein>
    <recommendedName>
        <fullName evidence="5">tRNA (mnm(5)s(2)U34)-methyltransferase, chloroplastic</fullName>
        <ecNumber evidence="3">2.1.1.61</ecNumber>
    </recommendedName>
    <alternativeName>
        <fullName evidence="4">5-aminomethyl-2-thiouridine methyltransferase</fullName>
    </alternativeName>
    <alternativeName>
        <fullName evidence="4">MnmC-like methyltransferase</fullName>
    </alternativeName>
    <alternativeName>
        <fullName evidence="4">atMnmM</fullName>
    </alternativeName>
</protein>
<proteinExistence type="evidence at protein level"/>
<feature type="transit peptide" description="Chloroplast" evidence="2">
    <location>
        <begin position="1"/>
        <end position="50"/>
    </location>
</feature>
<feature type="chain" id="PRO_0000458275" description="tRNA (mnm(5)s(2)U34)-methyltransferase, chloroplastic">
    <location>
        <begin position="51"/>
        <end position="274"/>
    </location>
</feature>
<feature type="binding site" evidence="1">
    <location>
        <position position="108"/>
    </location>
    <ligand>
        <name>S-adenosyl-L-methionine</name>
        <dbReference type="ChEBI" id="CHEBI:59789"/>
    </ligand>
</feature>
<feature type="binding site" evidence="1">
    <location>
        <position position="110"/>
    </location>
    <ligand>
        <name>S-adenosyl-L-methionine</name>
        <dbReference type="ChEBI" id="CHEBI:59789"/>
    </ligand>
</feature>
<feature type="binding site" evidence="1">
    <location>
        <position position="134"/>
    </location>
    <ligand>
        <name>S-adenosyl-L-methionine</name>
        <dbReference type="ChEBI" id="CHEBI:59789"/>
    </ligand>
</feature>
<feature type="binding site" evidence="1">
    <location>
        <position position="136"/>
    </location>
    <ligand>
        <name>S-adenosyl-L-methionine</name>
        <dbReference type="ChEBI" id="CHEBI:59789"/>
    </ligand>
</feature>
<feature type="binding site" evidence="1">
    <location>
        <position position="166"/>
    </location>
    <ligand>
        <name>S-adenosyl-L-methionine</name>
        <dbReference type="ChEBI" id="CHEBI:59789"/>
    </ligand>
</feature>
<reference key="1">
    <citation type="journal article" date="2000" name="Nature">
        <title>Sequence and analysis of chromosome 1 of the plant Arabidopsis thaliana.</title>
        <authorList>
            <person name="Theologis A."/>
            <person name="Ecker J.R."/>
            <person name="Palm C.J."/>
            <person name="Federspiel N.A."/>
            <person name="Kaul S."/>
            <person name="White O."/>
            <person name="Alonso J."/>
            <person name="Altafi H."/>
            <person name="Araujo R."/>
            <person name="Bowman C.L."/>
            <person name="Brooks S.Y."/>
            <person name="Buehler E."/>
            <person name="Chan A."/>
            <person name="Chao Q."/>
            <person name="Chen H."/>
            <person name="Cheuk R.F."/>
            <person name="Chin C.W."/>
            <person name="Chung M.K."/>
            <person name="Conn L."/>
            <person name="Conway A.B."/>
            <person name="Conway A.R."/>
            <person name="Creasy T.H."/>
            <person name="Dewar K."/>
            <person name="Dunn P."/>
            <person name="Etgu P."/>
            <person name="Feldblyum T.V."/>
            <person name="Feng J.-D."/>
            <person name="Fong B."/>
            <person name="Fujii C.Y."/>
            <person name="Gill J.E."/>
            <person name="Goldsmith A.D."/>
            <person name="Haas B."/>
            <person name="Hansen N.F."/>
            <person name="Hughes B."/>
            <person name="Huizar L."/>
            <person name="Hunter J.L."/>
            <person name="Jenkins J."/>
            <person name="Johnson-Hopson C."/>
            <person name="Khan S."/>
            <person name="Khaykin E."/>
            <person name="Kim C.J."/>
            <person name="Koo H.L."/>
            <person name="Kremenetskaia I."/>
            <person name="Kurtz D.B."/>
            <person name="Kwan A."/>
            <person name="Lam B."/>
            <person name="Langin-Hooper S."/>
            <person name="Lee A."/>
            <person name="Lee J.M."/>
            <person name="Lenz C.A."/>
            <person name="Li J.H."/>
            <person name="Li Y.-P."/>
            <person name="Lin X."/>
            <person name="Liu S.X."/>
            <person name="Liu Z.A."/>
            <person name="Luros J.S."/>
            <person name="Maiti R."/>
            <person name="Marziali A."/>
            <person name="Militscher J."/>
            <person name="Miranda M."/>
            <person name="Nguyen M."/>
            <person name="Nierman W.C."/>
            <person name="Osborne B.I."/>
            <person name="Pai G."/>
            <person name="Peterson J."/>
            <person name="Pham P.K."/>
            <person name="Rizzo M."/>
            <person name="Rooney T."/>
            <person name="Rowley D."/>
            <person name="Sakano H."/>
            <person name="Salzberg S.L."/>
            <person name="Schwartz J.R."/>
            <person name="Shinn P."/>
            <person name="Southwick A.M."/>
            <person name="Sun H."/>
            <person name="Tallon L.J."/>
            <person name="Tambunga G."/>
            <person name="Toriumi M.J."/>
            <person name="Town C.D."/>
            <person name="Utterback T."/>
            <person name="Van Aken S."/>
            <person name="Vaysberg M."/>
            <person name="Vysotskaia V.S."/>
            <person name="Walker M."/>
            <person name="Wu D."/>
            <person name="Yu G."/>
            <person name="Fraser C.M."/>
            <person name="Venter J.C."/>
            <person name="Davis R.W."/>
        </authorList>
    </citation>
    <scope>NUCLEOTIDE SEQUENCE [LARGE SCALE GENOMIC DNA]</scope>
    <source>
        <strain>cv. Columbia</strain>
    </source>
</reference>
<reference key="2">
    <citation type="journal article" date="2017" name="Plant J.">
        <title>Araport11: a complete reannotation of the Arabidopsis thaliana reference genome.</title>
        <authorList>
            <person name="Cheng C.Y."/>
            <person name="Krishnakumar V."/>
            <person name="Chan A.P."/>
            <person name="Thibaud-Nissen F."/>
            <person name="Schobel S."/>
            <person name="Town C.D."/>
        </authorList>
    </citation>
    <scope>GENOME REANNOTATION</scope>
    <source>
        <strain>cv. Columbia</strain>
    </source>
</reference>
<reference key="3">
    <citation type="journal article" date="2003" name="Science">
        <title>Empirical analysis of transcriptional activity in the Arabidopsis genome.</title>
        <authorList>
            <person name="Yamada K."/>
            <person name="Lim J."/>
            <person name="Dale J.M."/>
            <person name="Chen H."/>
            <person name="Shinn P."/>
            <person name="Palm C.J."/>
            <person name="Southwick A.M."/>
            <person name="Wu H.C."/>
            <person name="Kim C.J."/>
            <person name="Nguyen M."/>
            <person name="Pham P.K."/>
            <person name="Cheuk R.F."/>
            <person name="Karlin-Newmann G."/>
            <person name="Liu S.X."/>
            <person name="Lam B."/>
            <person name="Sakano H."/>
            <person name="Wu T."/>
            <person name="Yu G."/>
            <person name="Miranda M."/>
            <person name="Quach H.L."/>
            <person name="Tripp M."/>
            <person name="Chang C.H."/>
            <person name="Lee J.M."/>
            <person name="Toriumi M.J."/>
            <person name="Chan M.M."/>
            <person name="Tang C.C."/>
            <person name="Onodera C.S."/>
            <person name="Deng J.M."/>
            <person name="Akiyama K."/>
            <person name="Ansari Y."/>
            <person name="Arakawa T."/>
            <person name="Banh J."/>
            <person name="Banno F."/>
            <person name="Bowser L."/>
            <person name="Brooks S.Y."/>
            <person name="Carninci P."/>
            <person name="Chao Q."/>
            <person name="Choy N."/>
            <person name="Enju A."/>
            <person name="Goldsmith A.D."/>
            <person name="Gurjal M."/>
            <person name="Hansen N.F."/>
            <person name="Hayashizaki Y."/>
            <person name="Johnson-Hopson C."/>
            <person name="Hsuan V.W."/>
            <person name="Iida K."/>
            <person name="Karnes M."/>
            <person name="Khan S."/>
            <person name="Koesema E."/>
            <person name="Ishida J."/>
            <person name="Jiang P.X."/>
            <person name="Jones T."/>
            <person name="Kawai J."/>
            <person name="Kamiya A."/>
            <person name="Meyers C."/>
            <person name="Nakajima M."/>
            <person name="Narusaka M."/>
            <person name="Seki M."/>
            <person name="Sakurai T."/>
            <person name="Satou M."/>
            <person name="Tamse R."/>
            <person name="Vaysberg M."/>
            <person name="Wallender E.K."/>
            <person name="Wong C."/>
            <person name="Yamamura Y."/>
            <person name="Yuan S."/>
            <person name="Shinozaki K."/>
            <person name="Davis R.W."/>
            <person name="Theologis A."/>
            <person name="Ecker J.R."/>
        </authorList>
    </citation>
    <scope>NUCLEOTIDE SEQUENCE [LARGE SCALE MRNA]</scope>
    <source>
        <strain>cv. Columbia</strain>
    </source>
</reference>
<reference key="4">
    <citation type="journal article" date="2023" name="Nucleic Acids Res.">
        <title>Identification of a novel 5-aminomethyl-2-thiouridine methyltransferase in tRNA modification.</title>
        <authorList>
            <person name="Cho G."/>
            <person name="Lee J."/>
            <person name="Kim J."/>
        </authorList>
    </citation>
    <scope>FUNCTION</scope>
    <scope>CATALYTIC ACTIVITY</scope>
    <scope>PATHWAY</scope>
</reference>
<keyword id="KW-0150">Chloroplast</keyword>
<keyword id="KW-0489">Methyltransferase</keyword>
<keyword id="KW-0934">Plastid</keyword>
<keyword id="KW-1185">Reference proteome</keyword>
<keyword id="KW-0949">S-adenosyl-L-methionine</keyword>
<keyword id="KW-0808">Transferase</keyword>
<keyword id="KW-0809">Transit peptide</keyword>
<keyword id="KW-0819">tRNA processing</keyword>